<comment type="function">
    <text evidence="1">Dual-specificity methyltransferase that catalyzes the formation of 5-methyluridine at position 54 (m5U54) in all tRNAs, and that of position 341 (m5U341) in tmRNA (transfer-mRNA).</text>
</comment>
<comment type="catalytic activity">
    <reaction evidence="1">
        <text>uridine(54) in tRNA + S-adenosyl-L-methionine = 5-methyluridine(54) in tRNA + S-adenosyl-L-homocysteine + H(+)</text>
        <dbReference type="Rhea" id="RHEA:42712"/>
        <dbReference type="Rhea" id="RHEA-COMP:10167"/>
        <dbReference type="Rhea" id="RHEA-COMP:10193"/>
        <dbReference type="ChEBI" id="CHEBI:15378"/>
        <dbReference type="ChEBI" id="CHEBI:57856"/>
        <dbReference type="ChEBI" id="CHEBI:59789"/>
        <dbReference type="ChEBI" id="CHEBI:65315"/>
        <dbReference type="ChEBI" id="CHEBI:74447"/>
        <dbReference type="EC" id="2.1.1.35"/>
    </reaction>
</comment>
<comment type="catalytic activity">
    <reaction evidence="1">
        <text>uridine(341) in tmRNA + S-adenosyl-L-methionine = 5-methyluridine(341) in tmRNA + S-adenosyl-L-homocysteine + H(+)</text>
        <dbReference type="Rhea" id="RHEA:43612"/>
        <dbReference type="Rhea" id="RHEA-COMP:10630"/>
        <dbReference type="Rhea" id="RHEA-COMP:10631"/>
        <dbReference type="ChEBI" id="CHEBI:15378"/>
        <dbReference type="ChEBI" id="CHEBI:57856"/>
        <dbReference type="ChEBI" id="CHEBI:59789"/>
        <dbReference type="ChEBI" id="CHEBI:65315"/>
        <dbReference type="ChEBI" id="CHEBI:74447"/>
    </reaction>
</comment>
<comment type="similarity">
    <text evidence="1">Belongs to the class I-like SAM-binding methyltransferase superfamily. RNA M5U methyltransferase family. TrmA subfamily.</text>
</comment>
<dbReference type="EC" id="2.1.1.-" evidence="1"/>
<dbReference type="EC" id="2.1.1.35" evidence="1"/>
<dbReference type="EMBL" id="AE004091">
    <property type="protein sequence ID" value="AAG08106.1"/>
    <property type="molecule type" value="Genomic_DNA"/>
</dbReference>
<dbReference type="PIR" id="B83057">
    <property type="entry name" value="B83057"/>
</dbReference>
<dbReference type="RefSeq" id="NP_253408.1">
    <property type="nucleotide sequence ID" value="NC_002516.2"/>
</dbReference>
<dbReference type="RefSeq" id="WP_003113457.1">
    <property type="nucleotide sequence ID" value="NZ_QZGE01000018.1"/>
</dbReference>
<dbReference type="SMR" id="Q9HV78"/>
<dbReference type="FunCoup" id="Q9HV78">
    <property type="interactions" value="97"/>
</dbReference>
<dbReference type="STRING" id="208964.PA4720"/>
<dbReference type="PaxDb" id="208964-PA4720"/>
<dbReference type="DNASU" id="881587"/>
<dbReference type="GeneID" id="881587"/>
<dbReference type="KEGG" id="pae:PA4720"/>
<dbReference type="PATRIC" id="fig|208964.12.peg.4944"/>
<dbReference type="PseudoCAP" id="PA4720"/>
<dbReference type="HOGENOM" id="CLU_043022_0_0_6"/>
<dbReference type="InParanoid" id="Q9HV78"/>
<dbReference type="OrthoDB" id="9804590at2"/>
<dbReference type="PhylomeDB" id="Q9HV78"/>
<dbReference type="BioCyc" id="PAER208964:G1FZ6-4826-MONOMER"/>
<dbReference type="Proteomes" id="UP000002438">
    <property type="component" value="Chromosome"/>
</dbReference>
<dbReference type="GO" id="GO:0005829">
    <property type="term" value="C:cytosol"/>
    <property type="evidence" value="ECO:0000318"/>
    <property type="project" value="GO_Central"/>
</dbReference>
<dbReference type="GO" id="GO:0019843">
    <property type="term" value="F:rRNA binding"/>
    <property type="evidence" value="ECO:0000318"/>
    <property type="project" value="GO_Central"/>
</dbReference>
<dbReference type="GO" id="GO:0030697">
    <property type="term" value="F:tRNA (uracil(54)-C5)-methyltransferase activity, S-adenosyl methionine-dependent"/>
    <property type="evidence" value="ECO:0000318"/>
    <property type="project" value="GO_Central"/>
</dbReference>
<dbReference type="GO" id="GO:0000049">
    <property type="term" value="F:tRNA binding"/>
    <property type="evidence" value="ECO:0000318"/>
    <property type="project" value="GO_Central"/>
</dbReference>
<dbReference type="GO" id="GO:0030488">
    <property type="term" value="P:tRNA methylation"/>
    <property type="evidence" value="ECO:0007669"/>
    <property type="project" value="UniProtKB-UniRule"/>
</dbReference>
<dbReference type="CDD" id="cd02440">
    <property type="entry name" value="AdoMet_MTases"/>
    <property type="match status" value="1"/>
</dbReference>
<dbReference type="FunFam" id="2.40.50.1070:FF:000001">
    <property type="entry name" value="tRNA/tmRNA (uracil-C(5))-methyltransferase"/>
    <property type="match status" value="1"/>
</dbReference>
<dbReference type="FunFam" id="3.40.50.150:FF:000012">
    <property type="entry name" value="tRNA/tmRNA (uracil-C(5))-methyltransferase"/>
    <property type="match status" value="1"/>
</dbReference>
<dbReference type="Gene3D" id="2.40.50.1070">
    <property type="match status" value="1"/>
</dbReference>
<dbReference type="Gene3D" id="3.40.50.150">
    <property type="entry name" value="Vaccinia Virus protein VP39"/>
    <property type="match status" value="1"/>
</dbReference>
<dbReference type="HAMAP" id="MF_01011">
    <property type="entry name" value="RNA_methyltr_TrmA"/>
    <property type="match status" value="1"/>
</dbReference>
<dbReference type="InterPro" id="IPR030390">
    <property type="entry name" value="MeTrfase_TrmA_AS"/>
</dbReference>
<dbReference type="InterPro" id="IPR030391">
    <property type="entry name" value="MeTrfase_TrmA_CS"/>
</dbReference>
<dbReference type="InterPro" id="IPR029063">
    <property type="entry name" value="SAM-dependent_MTases_sf"/>
</dbReference>
<dbReference type="InterPro" id="IPR011869">
    <property type="entry name" value="TrmA_MeTrfase"/>
</dbReference>
<dbReference type="InterPro" id="IPR010280">
    <property type="entry name" value="U5_MeTrfase_fam"/>
</dbReference>
<dbReference type="NCBIfam" id="TIGR02143">
    <property type="entry name" value="trmA_only"/>
    <property type="match status" value="1"/>
</dbReference>
<dbReference type="PANTHER" id="PTHR47790">
    <property type="entry name" value="TRNA/TMRNA (URACIL-C(5))-METHYLTRANSFERASE"/>
    <property type="match status" value="1"/>
</dbReference>
<dbReference type="PANTHER" id="PTHR47790:SF2">
    <property type="entry name" value="TRNA_TMRNA (URACIL-C(5))-METHYLTRANSFERASE"/>
    <property type="match status" value="1"/>
</dbReference>
<dbReference type="Pfam" id="PF05958">
    <property type="entry name" value="tRNA_U5-meth_tr"/>
    <property type="match status" value="1"/>
</dbReference>
<dbReference type="SUPFAM" id="SSF53335">
    <property type="entry name" value="S-adenosyl-L-methionine-dependent methyltransferases"/>
    <property type="match status" value="1"/>
</dbReference>
<dbReference type="PROSITE" id="PS51687">
    <property type="entry name" value="SAM_MT_RNA_M5U"/>
    <property type="match status" value="1"/>
</dbReference>
<dbReference type="PROSITE" id="PS01230">
    <property type="entry name" value="TRMA_1"/>
    <property type="match status" value="1"/>
</dbReference>
<dbReference type="PROSITE" id="PS01231">
    <property type="entry name" value="TRMA_2"/>
    <property type="match status" value="1"/>
</dbReference>
<accession>Q9HV78</accession>
<organism>
    <name type="scientific">Pseudomonas aeruginosa (strain ATCC 15692 / DSM 22644 / CIP 104116 / JCM 14847 / LMG 12228 / 1C / PRS 101 / PAO1)</name>
    <dbReference type="NCBI Taxonomy" id="208964"/>
    <lineage>
        <taxon>Bacteria</taxon>
        <taxon>Pseudomonadati</taxon>
        <taxon>Pseudomonadota</taxon>
        <taxon>Gammaproteobacteria</taxon>
        <taxon>Pseudomonadales</taxon>
        <taxon>Pseudomonadaceae</taxon>
        <taxon>Pseudomonas</taxon>
    </lineage>
</organism>
<feature type="chain" id="PRO_0000161872" description="tRNA/tmRNA (uracil-C(5))-methyltransferase">
    <location>
        <begin position="1"/>
        <end position="363"/>
    </location>
</feature>
<feature type="active site" description="Nucleophile" evidence="1">
    <location>
        <position position="321"/>
    </location>
</feature>
<feature type="active site" description="Proton acceptor" evidence="1">
    <location>
        <position position="355"/>
    </location>
</feature>
<feature type="binding site" evidence="1">
    <location>
        <position position="187"/>
    </location>
    <ligand>
        <name>S-adenosyl-L-methionine</name>
        <dbReference type="ChEBI" id="CHEBI:59789"/>
    </ligand>
</feature>
<feature type="binding site" evidence="1">
    <location>
        <position position="215"/>
    </location>
    <ligand>
        <name>S-adenosyl-L-methionine</name>
        <dbReference type="ChEBI" id="CHEBI:59789"/>
    </ligand>
</feature>
<feature type="binding site" evidence="1">
    <location>
        <position position="220"/>
    </location>
    <ligand>
        <name>S-adenosyl-L-methionine</name>
        <dbReference type="ChEBI" id="CHEBI:59789"/>
    </ligand>
</feature>
<feature type="binding site" evidence="1">
    <location>
        <position position="236"/>
    </location>
    <ligand>
        <name>S-adenosyl-L-methionine</name>
        <dbReference type="ChEBI" id="CHEBI:59789"/>
    </ligand>
</feature>
<feature type="binding site" evidence="1">
    <location>
        <position position="296"/>
    </location>
    <ligand>
        <name>S-adenosyl-L-methionine</name>
        <dbReference type="ChEBI" id="CHEBI:59789"/>
    </ligand>
</feature>
<reference key="1">
    <citation type="journal article" date="2000" name="Nature">
        <title>Complete genome sequence of Pseudomonas aeruginosa PAO1, an opportunistic pathogen.</title>
        <authorList>
            <person name="Stover C.K."/>
            <person name="Pham X.-Q.T."/>
            <person name="Erwin A.L."/>
            <person name="Mizoguchi S.D."/>
            <person name="Warrener P."/>
            <person name="Hickey M.J."/>
            <person name="Brinkman F.S.L."/>
            <person name="Hufnagle W.O."/>
            <person name="Kowalik D.J."/>
            <person name="Lagrou M."/>
            <person name="Garber R.L."/>
            <person name="Goltry L."/>
            <person name="Tolentino E."/>
            <person name="Westbrock-Wadman S."/>
            <person name="Yuan Y."/>
            <person name="Brody L.L."/>
            <person name="Coulter S.N."/>
            <person name="Folger K.R."/>
            <person name="Kas A."/>
            <person name="Larbig K."/>
            <person name="Lim R.M."/>
            <person name="Smith K.A."/>
            <person name="Spencer D.H."/>
            <person name="Wong G.K.-S."/>
            <person name="Wu Z."/>
            <person name="Paulsen I.T."/>
            <person name="Reizer J."/>
            <person name="Saier M.H. Jr."/>
            <person name="Hancock R.E.W."/>
            <person name="Lory S."/>
            <person name="Olson M.V."/>
        </authorList>
    </citation>
    <scope>NUCLEOTIDE SEQUENCE [LARGE SCALE GENOMIC DNA]</scope>
    <source>
        <strain>ATCC 15692 / DSM 22644 / CIP 104116 / JCM 14847 / LMG 12228 / 1C / PRS 101 / PAO1</strain>
    </source>
</reference>
<evidence type="ECO:0000255" key="1">
    <source>
        <dbReference type="HAMAP-Rule" id="MF_01011"/>
    </source>
</evidence>
<keyword id="KW-0489">Methyltransferase</keyword>
<keyword id="KW-1185">Reference proteome</keyword>
<keyword id="KW-0949">S-adenosyl-L-methionine</keyword>
<keyword id="KW-0808">Transferase</keyword>
<keyword id="KW-0819">tRNA processing</keyword>
<sequence length="363" mass="41207">MSRPQFDPSAYAAQLEDKKSRLAGLLAPFAAPAPEVFESPREHYRLRAEFRLWRETGNEKRHYAMFEQGDKHTPILLEDFPIASRRINELMPRLKAAWADPALGFKLFQVEFLTTLAGDALITLCYHRPIDDAWRQAAEKLAAELGVNLVGRSRGKRIVVGRDYVEEELSVAGRRFRYRQPEGAFTQPNGEVNQKMLGWAYEALGQRDDDLLELYCGNGNFTLPLATRVRKVLATEISKSSVNAALANLADNAVDNVSLVRLSAEELTQALNEVRPFRRLADIDLKSYAFGSVFVDPPRAGMDPDTCELARRFERILYISCNPETLAQNIAQLHDTHRISRCALFDQFPYTHHMESGVLLERR</sequence>
<gene>
    <name evidence="1" type="primary">trmA</name>
    <name type="ordered locus">PA4720</name>
</gene>
<name>TRMA_PSEAE</name>
<protein>
    <recommendedName>
        <fullName evidence="1">tRNA/tmRNA (uracil-C(5))-methyltransferase</fullName>
        <ecNumber evidence="1">2.1.1.-</ecNumber>
        <ecNumber evidence="1">2.1.1.35</ecNumber>
    </recommendedName>
    <alternativeName>
        <fullName evidence="1">tRNA (uracil(54)-C(5))-methyltransferase</fullName>
    </alternativeName>
    <alternativeName>
        <fullName evidence="1">tRNA(m5U54)-methyltransferase</fullName>
        <shortName evidence="1">RUMT</shortName>
    </alternativeName>
    <alternativeName>
        <fullName evidence="1">tmRNA (uracil(341)-C(5))-methyltransferase</fullName>
    </alternativeName>
</protein>
<proteinExistence type="inferred from homology"/>